<reference key="1">
    <citation type="journal article" date="1996" name="J. Protein Chem.">
        <title>cDNA sequence analysis and mutagenesis studies on the A chain of beta-bungarotoxin from Taiwan banded krait.</title>
        <authorList>
            <person name="Chang L.-S."/>
            <person name="Wu P.-F."/>
            <person name="Chang C.-C."/>
        </authorList>
    </citation>
    <scope>NUCLEOTIDE SEQUENCE [MRNA]</scope>
    <source>
        <tissue>Venom gland</tissue>
    </source>
</reference>
<reference key="2">
    <citation type="journal article" date="2001" name="Toxicon">
        <title>What does beta-bungarotoxin do at the neuromuscular junction?</title>
        <authorList>
            <person name="Rowan E.G."/>
        </authorList>
    </citation>
    <scope>REVIEW</scope>
</reference>
<accession>Q90251</accession>
<sequence>AVCVSLLGAANIPPQHLNLYQFKEMIRYTIPCEKTWGEYADYGCYCGAGGSGTPIDALDRCCYVHDNCYGDAAKIRGCDPKTQSYSYKLTQRTIICYGAAGTCARVVCDCDRTAALCFGNSEYIEGHKNIDTKRHCQ</sequence>
<organism>
    <name type="scientific">Bungarus multicinctus</name>
    <name type="common">Many-banded krait</name>
    <dbReference type="NCBI Taxonomy" id="8616"/>
    <lineage>
        <taxon>Eukaryota</taxon>
        <taxon>Metazoa</taxon>
        <taxon>Chordata</taxon>
        <taxon>Craniata</taxon>
        <taxon>Vertebrata</taxon>
        <taxon>Euteleostomi</taxon>
        <taxon>Lepidosauria</taxon>
        <taxon>Squamata</taxon>
        <taxon>Bifurcata</taxon>
        <taxon>Unidentata</taxon>
        <taxon>Episquamata</taxon>
        <taxon>Toxicofera</taxon>
        <taxon>Serpentes</taxon>
        <taxon>Colubroidea</taxon>
        <taxon>Elapidae</taxon>
        <taxon>Bungarinae</taxon>
        <taxon>Bungarus</taxon>
    </lineage>
</organism>
<evidence type="ECO:0000250" key="1"/>
<evidence type="ECO:0000250" key="2">
    <source>
        <dbReference type="UniProtKB" id="P00617"/>
    </source>
</evidence>
<evidence type="ECO:0000250" key="3">
    <source>
        <dbReference type="UniProtKB" id="P14418"/>
    </source>
</evidence>
<evidence type="ECO:0000255" key="4">
    <source>
        <dbReference type="PROSITE-ProRule" id="PRU10035"/>
    </source>
</evidence>
<evidence type="ECO:0000255" key="5">
    <source>
        <dbReference type="PROSITE-ProRule" id="PRU10036"/>
    </source>
</evidence>
<evidence type="ECO:0000305" key="6"/>
<evidence type="ECO:0000305" key="7">
    <source>
    </source>
</evidence>
<proteinExistence type="evidence at transcript level"/>
<dbReference type="EC" id="3.1.1.4"/>
<dbReference type="EMBL" id="X98205">
    <property type="protein sequence ID" value="CAA66869.1"/>
    <property type="molecule type" value="mRNA"/>
</dbReference>
<dbReference type="SMR" id="Q90251"/>
<dbReference type="GO" id="GO:0005576">
    <property type="term" value="C:extracellular region"/>
    <property type="evidence" value="ECO:0007669"/>
    <property type="project" value="UniProtKB-SubCell"/>
</dbReference>
<dbReference type="GO" id="GO:0005509">
    <property type="term" value="F:calcium ion binding"/>
    <property type="evidence" value="ECO:0007669"/>
    <property type="project" value="InterPro"/>
</dbReference>
<dbReference type="GO" id="GO:0047498">
    <property type="term" value="F:calcium-dependent phospholipase A2 activity"/>
    <property type="evidence" value="ECO:0007669"/>
    <property type="project" value="TreeGrafter"/>
</dbReference>
<dbReference type="GO" id="GO:0005543">
    <property type="term" value="F:phospholipid binding"/>
    <property type="evidence" value="ECO:0007669"/>
    <property type="project" value="TreeGrafter"/>
</dbReference>
<dbReference type="GO" id="GO:0090729">
    <property type="term" value="F:toxin activity"/>
    <property type="evidence" value="ECO:0007669"/>
    <property type="project" value="UniProtKB-KW"/>
</dbReference>
<dbReference type="GO" id="GO:0050482">
    <property type="term" value="P:arachidonate secretion"/>
    <property type="evidence" value="ECO:0007669"/>
    <property type="project" value="InterPro"/>
</dbReference>
<dbReference type="GO" id="GO:0016042">
    <property type="term" value="P:lipid catabolic process"/>
    <property type="evidence" value="ECO:0007669"/>
    <property type="project" value="UniProtKB-KW"/>
</dbReference>
<dbReference type="GO" id="GO:0006644">
    <property type="term" value="P:phospholipid metabolic process"/>
    <property type="evidence" value="ECO:0007669"/>
    <property type="project" value="InterPro"/>
</dbReference>
<dbReference type="CDD" id="cd00125">
    <property type="entry name" value="PLA2c"/>
    <property type="match status" value="1"/>
</dbReference>
<dbReference type="FunFam" id="1.20.90.10:FF:000007">
    <property type="entry name" value="Acidic phospholipase A2"/>
    <property type="match status" value="1"/>
</dbReference>
<dbReference type="Gene3D" id="1.20.90.10">
    <property type="entry name" value="Phospholipase A2 domain"/>
    <property type="match status" value="1"/>
</dbReference>
<dbReference type="InterPro" id="IPR001211">
    <property type="entry name" value="PLipase_A2"/>
</dbReference>
<dbReference type="InterPro" id="IPR033112">
    <property type="entry name" value="PLipase_A2_Asp_AS"/>
</dbReference>
<dbReference type="InterPro" id="IPR016090">
    <property type="entry name" value="PLipase_A2_dom"/>
</dbReference>
<dbReference type="InterPro" id="IPR036444">
    <property type="entry name" value="PLipase_A2_dom_sf"/>
</dbReference>
<dbReference type="InterPro" id="IPR033113">
    <property type="entry name" value="PLipase_A2_His_AS"/>
</dbReference>
<dbReference type="PANTHER" id="PTHR11716:SF94">
    <property type="entry name" value="PHOSPHOLIPASE A2"/>
    <property type="match status" value="1"/>
</dbReference>
<dbReference type="PANTHER" id="PTHR11716">
    <property type="entry name" value="PHOSPHOLIPASE A2 FAMILY MEMBER"/>
    <property type="match status" value="1"/>
</dbReference>
<dbReference type="Pfam" id="PF00068">
    <property type="entry name" value="Phospholip_A2_1"/>
    <property type="match status" value="1"/>
</dbReference>
<dbReference type="PRINTS" id="PR00389">
    <property type="entry name" value="PHPHLIPASEA2"/>
</dbReference>
<dbReference type="SMART" id="SM00085">
    <property type="entry name" value="PA2c"/>
    <property type="match status" value="1"/>
</dbReference>
<dbReference type="SUPFAM" id="SSF48619">
    <property type="entry name" value="Phospholipase A2, PLA2"/>
    <property type="match status" value="1"/>
</dbReference>
<dbReference type="PROSITE" id="PS00119">
    <property type="entry name" value="PA2_ASP"/>
    <property type="match status" value="1"/>
</dbReference>
<dbReference type="PROSITE" id="PS00118">
    <property type="entry name" value="PA2_HIS"/>
    <property type="match status" value="1"/>
</dbReference>
<feature type="signal peptide" evidence="2">
    <location>
        <begin position="1" status="less than"/>
        <end position="9"/>
    </location>
</feature>
<feature type="propeptide" id="PRO_0000462264" evidence="2">
    <location>
        <begin position="10"/>
        <end position="17"/>
    </location>
</feature>
<feature type="chain" id="PRO_0000022844" description="Acidic phospholipase A2 beta-bungarotoxin A6 chain" evidence="2">
    <location>
        <begin position="18"/>
        <end position="137"/>
    </location>
</feature>
<feature type="active site" evidence="3">
    <location>
        <position position="65"/>
    </location>
</feature>
<feature type="active site" evidence="3">
    <location>
        <position position="111"/>
    </location>
</feature>
<feature type="binding site" evidence="2">
    <location>
        <position position="45"/>
    </location>
    <ligand>
        <name>Ca(2+)</name>
        <dbReference type="ChEBI" id="CHEBI:29108"/>
    </ligand>
</feature>
<feature type="binding site" evidence="2">
    <location>
        <position position="47"/>
    </location>
    <ligand>
        <name>Ca(2+)</name>
        <dbReference type="ChEBI" id="CHEBI:29108"/>
    </ligand>
</feature>
<feature type="binding site" evidence="2">
    <location>
        <position position="49"/>
    </location>
    <ligand>
        <name>Ca(2+)</name>
        <dbReference type="ChEBI" id="CHEBI:29108"/>
    </ligand>
</feature>
<feature type="binding site" evidence="2">
    <location>
        <position position="66"/>
    </location>
    <ligand>
        <name>Ca(2+)</name>
        <dbReference type="ChEBI" id="CHEBI:29108"/>
    </ligand>
</feature>
<feature type="disulfide bond" description="Interchain (with a B chain)" evidence="2">
    <location>
        <position position="32"/>
    </location>
</feature>
<feature type="disulfide bond" evidence="2">
    <location>
        <begin position="44"/>
        <end position="136"/>
    </location>
</feature>
<feature type="disulfide bond" evidence="2">
    <location>
        <begin position="46"/>
        <end position="62"/>
    </location>
</feature>
<feature type="disulfide bond" evidence="2">
    <location>
        <begin position="61"/>
        <end position="117"/>
    </location>
</feature>
<feature type="disulfide bond" evidence="2">
    <location>
        <begin position="68"/>
        <end position="110"/>
    </location>
</feature>
<feature type="disulfide bond" evidence="2">
    <location>
        <begin position="78"/>
        <end position="103"/>
    </location>
</feature>
<feature type="disulfide bond" evidence="2">
    <location>
        <begin position="96"/>
        <end position="108"/>
    </location>
</feature>
<feature type="non-terminal residue" evidence="7">
    <location>
        <position position="1"/>
    </location>
</feature>
<comment type="function">
    <text evidence="1">Snake venom phospholipase A2 (PLA2) that inhibits neuromuscular transmission by blocking acetylcholine release from the nerve termini. PLA2 catalyzes the calcium-dependent hydrolysis of the 2-acyl groups in 3-sn-phosphoglycerides (By similarity).</text>
</comment>
<comment type="catalytic activity">
    <reaction evidence="4 5">
        <text>a 1,2-diacyl-sn-glycero-3-phosphocholine + H2O = a 1-acyl-sn-glycero-3-phosphocholine + a fatty acid + H(+)</text>
        <dbReference type="Rhea" id="RHEA:15801"/>
        <dbReference type="ChEBI" id="CHEBI:15377"/>
        <dbReference type="ChEBI" id="CHEBI:15378"/>
        <dbReference type="ChEBI" id="CHEBI:28868"/>
        <dbReference type="ChEBI" id="CHEBI:57643"/>
        <dbReference type="ChEBI" id="CHEBI:58168"/>
        <dbReference type="EC" id="3.1.1.4"/>
    </reaction>
</comment>
<comment type="cofactor">
    <cofactor evidence="2">
        <name>Ca(2+)</name>
        <dbReference type="ChEBI" id="CHEBI:29108"/>
    </cofactor>
    <text evidence="2">Binds 1 Ca(2+) ion.</text>
</comment>
<comment type="subunit">
    <text evidence="2">Heterodimer; disulfide-linked. The A chains have phospholipase A2 activity and the B chains show homology with the basic protease inhibitors.</text>
</comment>
<comment type="subcellular location">
    <subcellularLocation>
        <location evidence="7">Secreted</location>
    </subcellularLocation>
</comment>
<comment type="tissue specificity">
    <text evidence="7">Expressed by the venom gland.</text>
</comment>
<comment type="similarity">
    <text evidence="6">Belongs to the phospholipase A2 family. Group I subfamily. D49 sub-subfamily.</text>
</comment>
<keyword id="KW-0106">Calcium</keyword>
<keyword id="KW-1015">Disulfide bond</keyword>
<keyword id="KW-0378">Hydrolase</keyword>
<keyword id="KW-0442">Lipid degradation</keyword>
<keyword id="KW-0443">Lipid metabolism</keyword>
<keyword id="KW-0479">Metal-binding</keyword>
<keyword id="KW-0528">Neurotoxin</keyword>
<keyword id="KW-0638">Presynaptic neurotoxin</keyword>
<keyword id="KW-0964">Secreted</keyword>
<keyword id="KW-0732">Signal</keyword>
<keyword id="KW-0800">Toxin</keyword>
<name>PA2A6_BUNMU</name>
<protein>
    <recommendedName>
        <fullName>Acidic phospholipase A2 beta-bungarotoxin A6 chain</fullName>
        <shortName>Beta-BuTX A6 chain</shortName>
        <shortName>svPLA2</shortName>
        <ecNumber>3.1.1.4</ecNumber>
    </recommendedName>
    <alternativeName>
        <fullName>Phosphatidylcholine 2-acylhydrolase</fullName>
    </alternativeName>
</protein>